<keyword id="KW-0067">ATP-binding</keyword>
<keyword id="KW-0436">Ligase</keyword>
<keyword id="KW-0479">Metal-binding</keyword>
<keyword id="KW-0547">Nucleotide-binding</keyword>
<keyword id="KW-0671">Queuosine biosynthesis</keyword>
<keyword id="KW-1185">Reference proteome</keyword>
<keyword id="KW-0862">Zinc</keyword>
<dbReference type="EC" id="6.3.4.20" evidence="1"/>
<dbReference type="EMBL" id="CP000082">
    <property type="protein sequence ID" value="AAZ18624.1"/>
    <property type="status" value="ALT_INIT"/>
    <property type="molecule type" value="Genomic_DNA"/>
</dbReference>
<dbReference type="RefSeq" id="WP_041757566.1">
    <property type="nucleotide sequence ID" value="NC_007204.1"/>
</dbReference>
<dbReference type="SMR" id="Q4FTN4"/>
<dbReference type="STRING" id="259536.Psyc_0771"/>
<dbReference type="KEGG" id="par:Psyc_0771"/>
<dbReference type="eggNOG" id="COG0603">
    <property type="taxonomic scope" value="Bacteria"/>
</dbReference>
<dbReference type="HOGENOM" id="CLU_081854_1_0_6"/>
<dbReference type="OrthoDB" id="9789567at2"/>
<dbReference type="UniPathway" id="UPA00391"/>
<dbReference type="Proteomes" id="UP000000546">
    <property type="component" value="Chromosome"/>
</dbReference>
<dbReference type="GO" id="GO:0005524">
    <property type="term" value="F:ATP binding"/>
    <property type="evidence" value="ECO:0007669"/>
    <property type="project" value="UniProtKB-UniRule"/>
</dbReference>
<dbReference type="GO" id="GO:0016879">
    <property type="term" value="F:ligase activity, forming carbon-nitrogen bonds"/>
    <property type="evidence" value="ECO:0007669"/>
    <property type="project" value="UniProtKB-UniRule"/>
</dbReference>
<dbReference type="GO" id="GO:0008270">
    <property type="term" value="F:zinc ion binding"/>
    <property type="evidence" value="ECO:0007669"/>
    <property type="project" value="UniProtKB-UniRule"/>
</dbReference>
<dbReference type="GO" id="GO:0008616">
    <property type="term" value="P:queuosine biosynthetic process"/>
    <property type="evidence" value="ECO:0007669"/>
    <property type="project" value="UniProtKB-UniRule"/>
</dbReference>
<dbReference type="CDD" id="cd01995">
    <property type="entry name" value="QueC-like"/>
    <property type="match status" value="1"/>
</dbReference>
<dbReference type="Gene3D" id="3.40.50.620">
    <property type="entry name" value="HUPs"/>
    <property type="match status" value="1"/>
</dbReference>
<dbReference type="HAMAP" id="MF_01633">
    <property type="entry name" value="QueC"/>
    <property type="match status" value="1"/>
</dbReference>
<dbReference type="InterPro" id="IPR018317">
    <property type="entry name" value="QueC"/>
</dbReference>
<dbReference type="InterPro" id="IPR014729">
    <property type="entry name" value="Rossmann-like_a/b/a_fold"/>
</dbReference>
<dbReference type="NCBIfam" id="TIGR00364">
    <property type="entry name" value="7-cyano-7-deazaguanine synthase QueC"/>
    <property type="match status" value="1"/>
</dbReference>
<dbReference type="PANTHER" id="PTHR42914">
    <property type="entry name" value="7-CYANO-7-DEAZAGUANINE SYNTHASE"/>
    <property type="match status" value="1"/>
</dbReference>
<dbReference type="PANTHER" id="PTHR42914:SF1">
    <property type="entry name" value="7-CYANO-7-DEAZAGUANINE SYNTHASE"/>
    <property type="match status" value="1"/>
</dbReference>
<dbReference type="Pfam" id="PF06508">
    <property type="entry name" value="QueC"/>
    <property type="match status" value="1"/>
</dbReference>
<dbReference type="PIRSF" id="PIRSF006293">
    <property type="entry name" value="ExsB"/>
    <property type="match status" value="1"/>
</dbReference>
<dbReference type="SUPFAM" id="SSF52402">
    <property type="entry name" value="Adenine nucleotide alpha hydrolases-like"/>
    <property type="match status" value="1"/>
</dbReference>
<accession>Q4FTN4</accession>
<comment type="function">
    <text evidence="1">Catalyzes the ATP-dependent conversion of 7-carboxy-7-deazaguanine (CDG) to 7-cyano-7-deazaguanine (preQ(0)).</text>
</comment>
<comment type="catalytic activity">
    <reaction evidence="1">
        <text>7-carboxy-7-deazaguanine + NH4(+) + ATP = 7-cyano-7-deazaguanine + ADP + phosphate + H2O + H(+)</text>
        <dbReference type="Rhea" id="RHEA:27982"/>
        <dbReference type="ChEBI" id="CHEBI:15377"/>
        <dbReference type="ChEBI" id="CHEBI:15378"/>
        <dbReference type="ChEBI" id="CHEBI:28938"/>
        <dbReference type="ChEBI" id="CHEBI:30616"/>
        <dbReference type="ChEBI" id="CHEBI:43474"/>
        <dbReference type="ChEBI" id="CHEBI:45075"/>
        <dbReference type="ChEBI" id="CHEBI:61036"/>
        <dbReference type="ChEBI" id="CHEBI:456216"/>
        <dbReference type="EC" id="6.3.4.20"/>
    </reaction>
</comment>
<comment type="cofactor">
    <cofactor evidence="1">
        <name>Zn(2+)</name>
        <dbReference type="ChEBI" id="CHEBI:29105"/>
    </cofactor>
    <text evidence="1">Binds 1 zinc ion per subunit.</text>
</comment>
<comment type="pathway">
    <text evidence="1">Purine metabolism; 7-cyano-7-deazaguanine biosynthesis.</text>
</comment>
<comment type="similarity">
    <text evidence="1">Belongs to the QueC family.</text>
</comment>
<comment type="sequence caution" evidence="2">
    <conflict type="erroneous initiation">
        <sequence resource="EMBL-CDS" id="AAZ18624"/>
    </conflict>
</comment>
<reference key="1">
    <citation type="journal article" date="2010" name="Appl. Environ. Microbiol.">
        <title>The genome sequence of Psychrobacter arcticus 273-4, a psychroactive Siberian permafrost bacterium, reveals mechanisms for adaptation to low-temperature growth.</title>
        <authorList>
            <person name="Ayala-del-Rio H.L."/>
            <person name="Chain P.S."/>
            <person name="Grzymski J.J."/>
            <person name="Ponder M.A."/>
            <person name="Ivanova N."/>
            <person name="Bergholz P.W."/>
            <person name="Di Bartolo G."/>
            <person name="Hauser L."/>
            <person name="Land M."/>
            <person name="Bakermans C."/>
            <person name="Rodrigues D."/>
            <person name="Klappenbach J."/>
            <person name="Zarka D."/>
            <person name="Larimer F."/>
            <person name="Richardson P."/>
            <person name="Murray A."/>
            <person name="Thomashow M."/>
            <person name="Tiedje J.M."/>
        </authorList>
    </citation>
    <scope>NUCLEOTIDE SEQUENCE [LARGE SCALE GENOMIC DNA]</scope>
    <source>
        <strain>DSM 17307 / VKM B-2377 / 273-4</strain>
    </source>
</reference>
<feature type="chain" id="PRO_0000246893" description="7-cyano-7-deazaguanine synthase">
    <location>
        <begin position="1"/>
        <end position="259"/>
    </location>
</feature>
<feature type="binding site" evidence="1">
    <location>
        <begin position="32"/>
        <end position="42"/>
    </location>
    <ligand>
        <name>ATP</name>
        <dbReference type="ChEBI" id="CHEBI:30616"/>
    </ligand>
</feature>
<feature type="binding site" evidence="1">
    <location>
        <position position="223"/>
    </location>
    <ligand>
        <name>Zn(2+)</name>
        <dbReference type="ChEBI" id="CHEBI:29105"/>
    </ligand>
</feature>
<feature type="binding site" evidence="1">
    <location>
        <position position="233"/>
    </location>
    <ligand>
        <name>Zn(2+)</name>
        <dbReference type="ChEBI" id="CHEBI:29105"/>
    </ligand>
</feature>
<feature type="binding site" evidence="1">
    <location>
        <position position="236"/>
    </location>
    <ligand>
        <name>Zn(2+)</name>
        <dbReference type="ChEBI" id="CHEBI:29105"/>
    </ligand>
</feature>
<feature type="binding site" evidence="1">
    <location>
        <position position="239"/>
    </location>
    <ligand>
        <name>Zn(2+)</name>
        <dbReference type="ChEBI" id="CHEBI:29105"/>
    </ligand>
</feature>
<protein>
    <recommendedName>
        <fullName evidence="1">7-cyano-7-deazaguanine synthase</fullName>
        <ecNumber evidence="1">6.3.4.20</ecNumber>
    </recommendedName>
    <alternativeName>
        <fullName evidence="1">7-cyano-7-carbaguanine synthase</fullName>
    </alternativeName>
    <alternativeName>
        <fullName evidence="1">PreQ(0) synthase</fullName>
    </alternativeName>
    <alternativeName>
        <fullName evidence="1">Queuosine biosynthesis protein QueC</fullName>
    </alternativeName>
</protein>
<sequence length="259" mass="27744">MTNTALPTSSADQENDTQLNELHKSQNAVVLLSGGLDSVTCLYWAKARYASVTAVSFDYGQRHNSELIAAKAIAETAGVNHRIIDIDIAQLGGSSLTDHSMIVPDGDTDKFPDKKRDEIDNDAIPNTYVPARNTIFLSYALAVAEVTDSNHIVIGVSSVDYSGYPDCRPEYIAAFQHMANLATKAGVTGHHLSIQTPLQQLSKAKTIELGLSLGVDYGQTISCYQADANGFACGVCDSCALRRQGFAQAGVADPTHYQS</sequence>
<gene>
    <name evidence="1" type="primary">queC</name>
    <name type="ordered locus">Psyc_0771</name>
</gene>
<proteinExistence type="inferred from homology"/>
<evidence type="ECO:0000255" key="1">
    <source>
        <dbReference type="HAMAP-Rule" id="MF_01633"/>
    </source>
</evidence>
<evidence type="ECO:0000305" key="2"/>
<organism>
    <name type="scientific">Psychrobacter arcticus (strain DSM 17307 / VKM B-2377 / 273-4)</name>
    <dbReference type="NCBI Taxonomy" id="259536"/>
    <lineage>
        <taxon>Bacteria</taxon>
        <taxon>Pseudomonadati</taxon>
        <taxon>Pseudomonadota</taxon>
        <taxon>Gammaproteobacteria</taxon>
        <taxon>Moraxellales</taxon>
        <taxon>Moraxellaceae</taxon>
        <taxon>Psychrobacter</taxon>
    </lineage>
</organism>
<name>QUEC_PSYA2</name>